<dbReference type="EMBL" id="AF107295">
    <property type="protein sequence ID" value="AAD39893.1"/>
    <property type="status" value="ALT_SEQ"/>
    <property type="molecule type" value="mRNA"/>
</dbReference>
<dbReference type="EMBL" id="AF260258">
    <property type="protein sequence ID" value="AAF70306.1"/>
    <property type="molecule type" value="mRNA"/>
</dbReference>
<dbReference type="EMBL" id="BC126067">
    <property type="protein sequence ID" value="AAI26068.2"/>
    <property type="molecule type" value="mRNA"/>
</dbReference>
<dbReference type="RefSeq" id="NP_072121.2">
    <property type="nucleotide sequence ID" value="NM_022599.2"/>
</dbReference>
<dbReference type="SMR" id="Q9WVJ4"/>
<dbReference type="BioGRID" id="249115">
    <property type="interactions" value="1"/>
</dbReference>
<dbReference type="ELM" id="Q9WVJ4"/>
<dbReference type="FunCoup" id="Q9WVJ4">
    <property type="interactions" value="693"/>
</dbReference>
<dbReference type="IntAct" id="Q9WVJ4">
    <property type="interactions" value="3"/>
</dbReference>
<dbReference type="MINT" id="Q9WVJ4"/>
<dbReference type="STRING" id="10116.ENSRNOP00000009119"/>
<dbReference type="iPTMnet" id="Q9WVJ4"/>
<dbReference type="PhosphoSitePlus" id="Q9WVJ4"/>
<dbReference type="jPOST" id="Q9WVJ4"/>
<dbReference type="PaxDb" id="10116-ENSRNOP00000009119"/>
<dbReference type="Ensembl" id="ENSRNOT00000009122.7">
    <property type="protein sequence ID" value="ENSRNOP00000009119.5"/>
    <property type="gene ID" value="ENSRNOG00000006399.8"/>
</dbReference>
<dbReference type="GeneID" id="64531"/>
<dbReference type="KEGG" id="rno:64531"/>
<dbReference type="UCSC" id="RGD:69400">
    <property type="organism name" value="rat"/>
</dbReference>
<dbReference type="AGR" id="RGD:69400"/>
<dbReference type="CTD" id="55333"/>
<dbReference type="RGD" id="69400">
    <property type="gene designation" value="Synj2bp"/>
</dbReference>
<dbReference type="eggNOG" id="KOG3528">
    <property type="taxonomic scope" value="Eukaryota"/>
</dbReference>
<dbReference type="GeneTree" id="ENSGT00830000128402"/>
<dbReference type="HOGENOM" id="CLU_149433_1_0_1"/>
<dbReference type="InParanoid" id="Q9WVJ4"/>
<dbReference type="OMA" id="FRNAGCD"/>
<dbReference type="OrthoDB" id="123971at2759"/>
<dbReference type="PRO" id="PR:Q9WVJ4"/>
<dbReference type="Proteomes" id="UP000002494">
    <property type="component" value="Chromosome 6"/>
</dbReference>
<dbReference type="Bgee" id="ENSRNOG00000006399">
    <property type="expression patterns" value="Expressed in quadriceps femoris and 19 other cell types or tissues"/>
</dbReference>
<dbReference type="GO" id="GO:0009986">
    <property type="term" value="C:cell surface"/>
    <property type="evidence" value="ECO:0000266"/>
    <property type="project" value="RGD"/>
</dbReference>
<dbReference type="GO" id="GO:0005741">
    <property type="term" value="C:mitochondrial outer membrane"/>
    <property type="evidence" value="ECO:0000314"/>
    <property type="project" value="RGD"/>
</dbReference>
<dbReference type="GO" id="GO:0005739">
    <property type="term" value="C:mitochondrion"/>
    <property type="evidence" value="ECO:0000266"/>
    <property type="project" value="RGD"/>
</dbReference>
<dbReference type="GO" id="GO:0070699">
    <property type="term" value="F:type II activin receptor binding"/>
    <property type="evidence" value="ECO:0000266"/>
    <property type="project" value="RGD"/>
</dbReference>
<dbReference type="GO" id="GO:0048312">
    <property type="term" value="P:intracellular distribution of mitochondria"/>
    <property type="evidence" value="ECO:0000314"/>
    <property type="project" value="RGD"/>
</dbReference>
<dbReference type="GO" id="GO:0016525">
    <property type="term" value="P:negative regulation of angiogenesis"/>
    <property type="evidence" value="ECO:0000250"/>
    <property type="project" value="UniProtKB"/>
</dbReference>
<dbReference type="GO" id="GO:0010596">
    <property type="term" value="P:negative regulation of endothelial cell migration"/>
    <property type="evidence" value="ECO:0000250"/>
    <property type="project" value="UniProtKB"/>
</dbReference>
<dbReference type="GO" id="GO:0001937">
    <property type="term" value="P:negative regulation of endothelial cell proliferation"/>
    <property type="evidence" value="ECO:0000250"/>
    <property type="project" value="UniProtKB"/>
</dbReference>
<dbReference type="GO" id="GO:0070373">
    <property type="term" value="P:negative regulation of ERK1 and ERK2 cascade"/>
    <property type="evidence" value="ECO:0000250"/>
    <property type="project" value="UniProtKB"/>
</dbReference>
<dbReference type="GO" id="GO:1903671">
    <property type="term" value="P:negative regulation of sprouting angiogenesis"/>
    <property type="evidence" value="ECO:0000250"/>
    <property type="project" value="UniProtKB"/>
</dbReference>
<dbReference type="GO" id="GO:0032927">
    <property type="term" value="P:positive regulation of activin receptor signaling pathway"/>
    <property type="evidence" value="ECO:0000266"/>
    <property type="project" value="RGD"/>
</dbReference>
<dbReference type="GO" id="GO:0006605">
    <property type="term" value="P:protein targeting"/>
    <property type="evidence" value="ECO:0000266"/>
    <property type="project" value="RGD"/>
</dbReference>
<dbReference type="GO" id="GO:0030100">
    <property type="term" value="P:regulation of endocytosis"/>
    <property type="evidence" value="ECO:0000266"/>
    <property type="project" value="RGD"/>
</dbReference>
<dbReference type="GO" id="GO:0008593">
    <property type="term" value="P:regulation of Notch signaling pathway"/>
    <property type="evidence" value="ECO:0000250"/>
    <property type="project" value="UniProtKB"/>
</dbReference>
<dbReference type="GO" id="GO:0007266">
    <property type="term" value="P:Rho protein signal transduction"/>
    <property type="evidence" value="ECO:0000266"/>
    <property type="project" value="RGD"/>
</dbReference>
<dbReference type="CDD" id="cd06709">
    <property type="entry name" value="PDZ_SYNJ2BP-like"/>
    <property type="match status" value="1"/>
</dbReference>
<dbReference type="FunFam" id="2.30.42.10:FF:000161">
    <property type="entry name" value="Synaptojanin-2-binding protein"/>
    <property type="match status" value="1"/>
</dbReference>
<dbReference type="Gene3D" id="2.30.42.10">
    <property type="match status" value="1"/>
</dbReference>
<dbReference type="InterPro" id="IPR001478">
    <property type="entry name" value="PDZ"/>
</dbReference>
<dbReference type="InterPro" id="IPR036034">
    <property type="entry name" value="PDZ_sf"/>
</dbReference>
<dbReference type="InterPro" id="IPR050614">
    <property type="entry name" value="Synaptic_Scaffolding_LAP-MAGUK"/>
</dbReference>
<dbReference type="PANTHER" id="PTHR23119">
    <property type="entry name" value="DISCS LARGE"/>
    <property type="match status" value="1"/>
</dbReference>
<dbReference type="PANTHER" id="PTHR23119:SF51">
    <property type="entry name" value="DISKS LARGE 1 TUMOR SUPPRESSOR PROTEIN"/>
    <property type="match status" value="1"/>
</dbReference>
<dbReference type="Pfam" id="PF00595">
    <property type="entry name" value="PDZ"/>
    <property type="match status" value="1"/>
</dbReference>
<dbReference type="SMART" id="SM00228">
    <property type="entry name" value="PDZ"/>
    <property type="match status" value="1"/>
</dbReference>
<dbReference type="SUPFAM" id="SSF50156">
    <property type="entry name" value="PDZ domain-like"/>
    <property type="match status" value="1"/>
</dbReference>
<dbReference type="PROSITE" id="PS50106">
    <property type="entry name" value="PDZ"/>
    <property type="match status" value="1"/>
</dbReference>
<reference key="1">
    <citation type="journal article" date="1999" name="EMBO J.">
        <title>Recruitment of an alternatively spliced form of synaptojanin 2 to mitochondria by the interaction with the PDZ domain of a mitochondrial outer membrane protein.</title>
        <authorList>
            <person name="Nemoto Y."/>
            <person name="De Camilli P."/>
        </authorList>
    </citation>
    <scope>NUCLEOTIDE SEQUENCE [MRNA]</scope>
    <scope>INTERACTION WITH SYNJ2</scope>
    <scope>SUBCELLULAR LOCATION</scope>
</reference>
<reference key="2">
    <citation type="submission" date="2000-04" db="EMBL/GenBank/DDBJ databases">
        <title>Production and characterization of monoclonal antibodies against NPW16: a novel PDZ protein.</title>
        <authorList>
            <person name="Jin W."/>
            <person name="Wang Y."/>
            <person name="Yang H."/>
            <person name="Liao B."/>
            <person name="Ju G."/>
        </authorList>
    </citation>
    <scope>NUCLEOTIDE SEQUENCE [MRNA]</scope>
    <source>
        <strain>Sprague-Dawley</strain>
    </source>
</reference>
<reference key="3">
    <citation type="journal article" date="2004" name="Genome Res.">
        <title>The status, quality, and expansion of the NIH full-length cDNA project: the Mammalian Gene Collection (MGC).</title>
        <authorList>
            <consortium name="The MGC Project Team"/>
        </authorList>
    </citation>
    <scope>NUCLEOTIDE SEQUENCE [LARGE SCALE MRNA]</scope>
    <source>
        <tissue>Liver</tissue>
    </source>
</reference>
<reference key="4">
    <citation type="journal article" date="2005" name="Biochim. Biophys. Acta">
        <title>Outer membrane protein 25-a mitochondrial anchor and inhibitor of stress-activated protein kinase-3.</title>
        <authorList>
            <person name="Court N.W."/>
            <person name="Ingley E."/>
            <person name="Klinken S.P."/>
            <person name="Bogoyevitch M.A."/>
        </authorList>
    </citation>
    <scope>INTERACTION WITH MAPK12</scope>
</reference>
<protein>
    <recommendedName>
        <fullName>Synaptojanin-2-binding protein</fullName>
    </recommendedName>
    <alternativeName>
        <fullName>Mitochondrial outer membrane protein 25</fullName>
    </alternativeName>
    <alternativeName>
        <fullName>NPW16</fullName>
    </alternativeName>
</protein>
<evidence type="ECO:0000250" key="1">
    <source>
        <dbReference type="UniProtKB" id="P57105"/>
    </source>
</evidence>
<evidence type="ECO:0000250" key="2">
    <source>
        <dbReference type="UniProtKB" id="Q9D6K5"/>
    </source>
</evidence>
<evidence type="ECO:0000255" key="3"/>
<evidence type="ECO:0000255" key="4">
    <source>
        <dbReference type="PROSITE-ProRule" id="PRU00143"/>
    </source>
</evidence>
<evidence type="ECO:0000269" key="5">
    <source>
    </source>
</evidence>
<evidence type="ECO:0000269" key="6">
    <source>
    </source>
</evidence>
<evidence type="ECO:0000305" key="7"/>
<gene>
    <name type="primary">Synj2bp</name>
    <name type="synonym">Omp25</name>
</gene>
<organism>
    <name type="scientific">Rattus norvegicus</name>
    <name type="common">Rat</name>
    <dbReference type="NCBI Taxonomy" id="10116"/>
    <lineage>
        <taxon>Eukaryota</taxon>
        <taxon>Metazoa</taxon>
        <taxon>Chordata</taxon>
        <taxon>Craniata</taxon>
        <taxon>Vertebrata</taxon>
        <taxon>Euteleostomi</taxon>
        <taxon>Mammalia</taxon>
        <taxon>Eutheria</taxon>
        <taxon>Euarchontoglires</taxon>
        <taxon>Glires</taxon>
        <taxon>Rodentia</taxon>
        <taxon>Myomorpha</taxon>
        <taxon>Muroidea</taxon>
        <taxon>Muridae</taxon>
        <taxon>Murinae</taxon>
        <taxon>Rattus</taxon>
    </lineage>
</organism>
<sequence>MNGRVDYLVSEEEINLTRGPSGLGFNIVGGTDQQYVSNDSGIYVSRIKEDGAAARDGRLQEGDKILSVNGQDLKNLLHQDAVDLFRNAGYAVSLRVQHRLPVQNGPIVHRGDGEPSGVPVAVVLLPVFALTLVAVWAFVRYRKQL</sequence>
<comment type="function">
    <text evidence="2">Regulates endocytosis of activin type 2 receptor kinases through the Ral/RALBP1-dependent pathway and may be involved in suppression of activin-induced signal transduction.</text>
</comment>
<comment type="subunit">
    <text evidence="1 2 5 6">Binds (via the PDZ domain) to isoform 2A of SYNJ2 (via the unique motif in the C-terminus) (PubMed:10357812). Interacts (via C-terminus) with RALBP1. Interacts (via PDZ domain) with ACVR2A (via C-terminus) and ACVR2B (via C-terminus). Forms a ternary complex with ACVR2A and RALBP1 (By similarity). Interacts with MAPK12 (PubMed:15878399). Interacts with DLL1; enhances DLL1 protein stability, and promotes notch signaling in endothelial cells (By similarity).</text>
</comment>
<comment type="interaction">
    <interactant intactId="EBI-7007454">
        <id>Q9WVJ4</id>
    </interactant>
    <interactant intactId="EBI-7007476">
        <id>O55207-3</id>
        <label>Synj2</label>
    </interactant>
    <organismsDiffer>false</organismsDiffer>
    <experiments>9</experiments>
</comment>
<comment type="subcellular location">
    <subcellularLocation>
        <location evidence="5">Mitochondrion outer membrane</location>
    </subcellularLocation>
</comment>
<comment type="tissue specificity">
    <text>Widely expressed.</text>
</comment>
<comment type="sequence caution" evidence="7">
    <conflict type="miscellaneous discrepancy">
        <sequence resource="EMBL-CDS" id="AAD39893"/>
    </conflict>
    <text>Chimeric cDNA.</text>
</comment>
<proteinExistence type="evidence at protein level"/>
<name>SYJ2B_RAT</name>
<accession>Q9WVJ4</accession>
<accession>A0JN00</accession>
<feature type="chain" id="PRO_0000072384" description="Synaptojanin-2-binding protein">
    <location>
        <begin position="1"/>
        <end position="145"/>
    </location>
</feature>
<feature type="topological domain" description="Cytoplasmic" evidence="3">
    <location>
        <begin position="1"/>
        <end position="117"/>
    </location>
</feature>
<feature type="transmembrane region" description="Helical" evidence="3">
    <location>
        <begin position="118"/>
        <end position="138"/>
    </location>
</feature>
<feature type="topological domain" description="Mitochondrial intermembrane" evidence="3">
    <location>
        <begin position="139"/>
        <end position="145"/>
    </location>
</feature>
<feature type="domain" description="PDZ" evidence="4">
    <location>
        <begin position="13"/>
        <end position="100"/>
    </location>
</feature>
<keyword id="KW-0472">Membrane</keyword>
<keyword id="KW-0496">Mitochondrion</keyword>
<keyword id="KW-1000">Mitochondrion outer membrane</keyword>
<keyword id="KW-1185">Reference proteome</keyword>
<keyword id="KW-0812">Transmembrane</keyword>
<keyword id="KW-1133">Transmembrane helix</keyword>